<feature type="initiator methionine" description="Removed" evidence="1">
    <location>
        <position position="1"/>
    </location>
</feature>
<feature type="chain" id="PRO_1000117382" description="Formamidopyrimidine-DNA glycosylase">
    <location>
        <begin position="2"/>
        <end position="269"/>
    </location>
</feature>
<feature type="zinc finger region" description="FPG-type" evidence="2">
    <location>
        <begin position="235"/>
        <end position="269"/>
    </location>
</feature>
<feature type="active site" description="Schiff-base intermediate with DNA" evidence="2">
    <location>
        <position position="2"/>
    </location>
</feature>
<feature type="active site" description="Proton donor" evidence="2">
    <location>
        <position position="3"/>
    </location>
</feature>
<feature type="active site" description="Proton donor; for beta-elimination activity" evidence="2">
    <location>
        <position position="57"/>
    </location>
</feature>
<feature type="active site" description="Proton donor; for delta-elimination activity" evidence="2">
    <location>
        <position position="259"/>
    </location>
</feature>
<feature type="binding site" evidence="2">
    <location>
        <position position="90"/>
    </location>
    <ligand>
        <name>DNA</name>
        <dbReference type="ChEBI" id="CHEBI:16991"/>
    </ligand>
</feature>
<feature type="binding site" evidence="2">
    <location>
        <position position="109"/>
    </location>
    <ligand>
        <name>DNA</name>
        <dbReference type="ChEBI" id="CHEBI:16991"/>
    </ligand>
</feature>
<feature type="binding site" evidence="2">
    <location>
        <position position="150"/>
    </location>
    <ligand>
        <name>DNA</name>
        <dbReference type="ChEBI" id="CHEBI:16991"/>
    </ligand>
</feature>
<name>FPG_ECO8A</name>
<reference key="1">
    <citation type="journal article" date="2009" name="PLoS Genet.">
        <title>Organised genome dynamics in the Escherichia coli species results in highly diverse adaptive paths.</title>
        <authorList>
            <person name="Touchon M."/>
            <person name="Hoede C."/>
            <person name="Tenaillon O."/>
            <person name="Barbe V."/>
            <person name="Baeriswyl S."/>
            <person name="Bidet P."/>
            <person name="Bingen E."/>
            <person name="Bonacorsi S."/>
            <person name="Bouchier C."/>
            <person name="Bouvet O."/>
            <person name="Calteau A."/>
            <person name="Chiapello H."/>
            <person name="Clermont O."/>
            <person name="Cruveiller S."/>
            <person name="Danchin A."/>
            <person name="Diard M."/>
            <person name="Dossat C."/>
            <person name="Karoui M.E."/>
            <person name="Frapy E."/>
            <person name="Garry L."/>
            <person name="Ghigo J.M."/>
            <person name="Gilles A.M."/>
            <person name="Johnson J."/>
            <person name="Le Bouguenec C."/>
            <person name="Lescat M."/>
            <person name="Mangenot S."/>
            <person name="Martinez-Jehanne V."/>
            <person name="Matic I."/>
            <person name="Nassif X."/>
            <person name="Oztas S."/>
            <person name="Petit M.A."/>
            <person name="Pichon C."/>
            <person name="Rouy Z."/>
            <person name="Ruf C.S."/>
            <person name="Schneider D."/>
            <person name="Tourret J."/>
            <person name="Vacherie B."/>
            <person name="Vallenet D."/>
            <person name="Medigue C."/>
            <person name="Rocha E.P.C."/>
            <person name="Denamur E."/>
        </authorList>
    </citation>
    <scope>NUCLEOTIDE SEQUENCE [LARGE SCALE GENOMIC DNA]</scope>
    <source>
        <strain>IAI1</strain>
    </source>
</reference>
<evidence type="ECO:0000250" key="1"/>
<evidence type="ECO:0000255" key="2">
    <source>
        <dbReference type="HAMAP-Rule" id="MF_00103"/>
    </source>
</evidence>
<protein>
    <recommendedName>
        <fullName evidence="2">Formamidopyrimidine-DNA glycosylase</fullName>
        <shortName evidence="2">Fapy-DNA glycosylase</shortName>
        <ecNumber evidence="2">3.2.2.23</ecNumber>
    </recommendedName>
    <alternativeName>
        <fullName evidence="2">DNA-(apurinic or apyrimidinic site) lyase MutM</fullName>
        <shortName evidence="2">AP lyase MutM</shortName>
        <ecNumber evidence="2">4.2.99.18</ecNumber>
    </alternativeName>
</protein>
<sequence>MPELPEVETSRRGIEPHLVGATILHAVVRNGRLRWPVSEEIYRLSDQPVLSVQRRAKYLLLELPEGWIIIHLGMSGSLRILPEELPPEKHDHVDLVMSNGKVLRYTDPRRFGAWLWTKELEGHNVLAHLGPEPLSDDFNGEYLHQKCAKKKTAIKPWLMDNKLVVGVGNIYASESLFAAGIHPDRLASSLSLAECELLARVIKAVLLRSIEQGGTTLKDFLQSDGKPGYFAQELQVYGRKGEPCRVCGTPIVATKHAQRATFYCRQCQK</sequence>
<accession>B7M4B9</accession>
<dbReference type="EC" id="3.2.2.23" evidence="2"/>
<dbReference type="EC" id="4.2.99.18" evidence="2"/>
<dbReference type="EMBL" id="CU928160">
    <property type="protein sequence ID" value="CAR00602.1"/>
    <property type="molecule type" value="Genomic_DNA"/>
</dbReference>
<dbReference type="RefSeq" id="WP_001114533.1">
    <property type="nucleotide sequence ID" value="NC_011741.1"/>
</dbReference>
<dbReference type="SMR" id="B7M4B9"/>
<dbReference type="GeneID" id="93778348"/>
<dbReference type="KEGG" id="ecr:ECIAI1_3805"/>
<dbReference type="HOGENOM" id="CLU_038423_1_1_6"/>
<dbReference type="GO" id="GO:0034039">
    <property type="term" value="F:8-oxo-7,8-dihydroguanine DNA N-glycosylase activity"/>
    <property type="evidence" value="ECO:0007669"/>
    <property type="project" value="TreeGrafter"/>
</dbReference>
<dbReference type="GO" id="GO:0140078">
    <property type="term" value="F:class I DNA-(apurinic or apyrimidinic site) endonuclease activity"/>
    <property type="evidence" value="ECO:0007669"/>
    <property type="project" value="UniProtKB-EC"/>
</dbReference>
<dbReference type="GO" id="GO:0003684">
    <property type="term" value="F:damaged DNA binding"/>
    <property type="evidence" value="ECO:0007669"/>
    <property type="project" value="InterPro"/>
</dbReference>
<dbReference type="GO" id="GO:0008270">
    <property type="term" value="F:zinc ion binding"/>
    <property type="evidence" value="ECO:0007669"/>
    <property type="project" value="UniProtKB-UniRule"/>
</dbReference>
<dbReference type="GO" id="GO:0006284">
    <property type="term" value="P:base-excision repair"/>
    <property type="evidence" value="ECO:0007669"/>
    <property type="project" value="InterPro"/>
</dbReference>
<dbReference type="CDD" id="cd08966">
    <property type="entry name" value="EcFpg-like_N"/>
    <property type="match status" value="1"/>
</dbReference>
<dbReference type="FunFam" id="1.10.8.50:FF:000003">
    <property type="entry name" value="Formamidopyrimidine-DNA glycosylase"/>
    <property type="match status" value="1"/>
</dbReference>
<dbReference type="FunFam" id="3.20.190.10:FF:000001">
    <property type="entry name" value="Formamidopyrimidine-DNA glycosylase"/>
    <property type="match status" value="1"/>
</dbReference>
<dbReference type="Gene3D" id="1.10.8.50">
    <property type="match status" value="1"/>
</dbReference>
<dbReference type="Gene3D" id="3.20.190.10">
    <property type="entry name" value="MutM-like, N-terminal"/>
    <property type="match status" value="1"/>
</dbReference>
<dbReference type="HAMAP" id="MF_00103">
    <property type="entry name" value="Fapy_DNA_glycosyl"/>
    <property type="match status" value="1"/>
</dbReference>
<dbReference type="InterPro" id="IPR015886">
    <property type="entry name" value="DNA_glyclase/AP_lyase_DNA-bd"/>
</dbReference>
<dbReference type="InterPro" id="IPR015887">
    <property type="entry name" value="DNA_glyclase_Znf_dom_DNA_BS"/>
</dbReference>
<dbReference type="InterPro" id="IPR020629">
    <property type="entry name" value="Formamido-pyr_DNA_Glyclase"/>
</dbReference>
<dbReference type="InterPro" id="IPR012319">
    <property type="entry name" value="FPG_cat"/>
</dbReference>
<dbReference type="InterPro" id="IPR035937">
    <property type="entry name" value="MutM-like_N-ter"/>
</dbReference>
<dbReference type="InterPro" id="IPR010979">
    <property type="entry name" value="Ribosomal_uS13-like_H2TH"/>
</dbReference>
<dbReference type="InterPro" id="IPR000214">
    <property type="entry name" value="Znf_DNA_glyclase/AP_lyase"/>
</dbReference>
<dbReference type="InterPro" id="IPR010663">
    <property type="entry name" value="Znf_FPG/IleRS"/>
</dbReference>
<dbReference type="NCBIfam" id="TIGR00577">
    <property type="entry name" value="fpg"/>
    <property type="match status" value="1"/>
</dbReference>
<dbReference type="NCBIfam" id="NF002211">
    <property type="entry name" value="PRK01103.1"/>
    <property type="match status" value="1"/>
</dbReference>
<dbReference type="PANTHER" id="PTHR22993">
    <property type="entry name" value="FORMAMIDOPYRIMIDINE-DNA GLYCOSYLASE"/>
    <property type="match status" value="1"/>
</dbReference>
<dbReference type="PANTHER" id="PTHR22993:SF9">
    <property type="entry name" value="FORMAMIDOPYRIMIDINE-DNA GLYCOSYLASE"/>
    <property type="match status" value="1"/>
</dbReference>
<dbReference type="Pfam" id="PF01149">
    <property type="entry name" value="Fapy_DNA_glyco"/>
    <property type="match status" value="1"/>
</dbReference>
<dbReference type="Pfam" id="PF06831">
    <property type="entry name" value="H2TH"/>
    <property type="match status" value="1"/>
</dbReference>
<dbReference type="Pfam" id="PF06827">
    <property type="entry name" value="zf-FPG_IleRS"/>
    <property type="match status" value="1"/>
</dbReference>
<dbReference type="SMART" id="SM00898">
    <property type="entry name" value="Fapy_DNA_glyco"/>
    <property type="match status" value="1"/>
</dbReference>
<dbReference type="SMART" id="SM01232">
    <property type="entry name" value="H2TH"/>
    <property type="match status" value="1"/>
</dbReference>
<dbReference type="SUPFAM" id="SSF57716">
    <property type="entry name" value="Glucocorticoid receptor-like (DNA-binding domain)"/>
    <property type="match status" value="1"/>
</dbReference>
<dbReference type="SUPFAM" id="SSF81624">
    <property type="entry name" value="N-terminal domain of MutM-like DNA repair proteins"/>
    <property type="match status" value="1"/>
</dbReference>
<dbReference type="SUPFAM" id="SSF46946">
    <property type="entry name" value="S13-like H2TH domain"/>
    <property type="match status" value="1"/>
</dbReference>
<dbReference type="PROSITE" id="PS51068">
    <property type="entry name" value="FPG_CAT"/>
    <property type="match status" value="1"/>
</dbReference>
<dbReference type="PROSITE" id="PS01242">
    <property type="entry name" value="ZF_FPG_1"/>
    <property type="match status" value="1"/>
</dbReference>
<dbReference type="PROSITE" id="PS51066">
    <property type="entry name" value="ZF_FPG_2"/>
    <property type="match status" value="1"/>
</dbReference>
<keyword id="KW-0227">DNA damage</keyword>
<keyword id="KW-0234">DNA repair</keyword>
<keyword id="KW-0238">DNA-binding</keyword>
<keyword id="KW-0326">Glycosidase</keyword>
<keyword id="KW-0378">Hydrolase</keyword>
<keyword id="KW-0456">Lyase</keyword>
<keyword id="KW-0479">Metal-binding</keyword>
<keyword id="KW-0511">Multifunctional enzyme</keyword>
<keyword id="KW-0862">Zinc</keyword>
<keyword id="KW-0863">Zinc-finger</keyword>
<organism>
    <name type="scientific">Escherichia coli O8 (strain IAI1)</name>
    <dbReference type="NCBI Taxonomy" id="585034"/>
    <lineage>
        <taxon>Bacteria</taxon>
        <taxon>Pseudomonadati</taxon>
        <taxon>Pseudomonadota</taxon>
        <taxon>Gammaproteobacteria</taxon>
        <taxon>Enterobacterales</taxon>
        <taxon>Enterobacteriaceae</taxon>
        <taxon>Escherichia</taxon>
    </lineage>
</organism>
<proteinExistence type="inferred from homology"/>
<gene>
    <name evidence="2" type="primary">mutM</name>
    <name evidence="2" type="synonym">fpg</name>
    <name type="ordered locus">ECIAI1_3805</name>
</gene>
<comment type="function">
    <text evidence="2">Involved in base excision repair of DNA damaged by oxidation or by mutagenic agents. Acts as a DNA glycosylase that recognizes and removes damaged bases. Has a preference for oxidized purines, such as 7,8-dihydro-8-oxoguanine (8-oxoG). Has AP (apurinic/apyrimidinic) lyase activity and introduces nicks in the DNA strand. Cleaves the DNA backbone by beta-delta elimination to generate a single-strand break at the site of the removed base with both 3'- and 5'-phosphates.</text>
</comment>
<comment type="catalytic activity">
    <reaction evidence="2">
        <text>Hydrolysis of DNA containing ring-opened 7-methylguanine residues, releasing 2,6-diamino-4-hydroxy-5-(N-methyl)formamidopyrimidine.</text>
        <dbReference type="EC" id="3.2.2.23"/>
    </reaction>
</comment>
<comment type="catalytic activity">
    <reaction evidence="2">
        <text>2'-deoxyribonucleotide-(2'-deoxyribose 5'-phosphate)-2'-deoxyribonucleotide-DNA = a 3'-end 2'-deoxyribonucleotide-(2,3-dehydro-2,3-deoxyribose 5'-phosphate)-DNA + a 5'-end 5'-phospho-2'-deoxyribonucleoside-DNA + H(+)</text>
        <dbReference type="Rhea" id="RHEA:66592"/>
        <dbReference type="Rhea" id="RHEA-COMP:13180"/>
        <dbReference type="Rhea" id="RHEA-COMP:16897"/>
        <dbReference type="Rhea" id="RHEA-COMP:17067"/>
        <dbReference type="ChEBI" id="CHEBI:15378"/>
        <dbReference type="ChEBI" id="CHEBI:136412"/>
        <dbReference type="ChEBI" id="CHEBI:157695"/>
        <dbReference type="ChEBI" id="CHEBI:167181"/>
        <dbReference type="EC" id="4.2.99.18"/>
    </reaction>
</comment>
<comment type="cofactor">
    <cofactor evidence="2">
        <name>Zn(2+)</name>
        <dbReference type="ChEBI" id="CHEBI:29105"/>
    </cofactor>
    <text evidence="2">Binds 1 zinc ion per subunit.</text>
</comment>
<comment type="subunit">
    <text evidence="2">Monomer.</text>
</comment>
<comment type="similarity">
    <text evidence="2">Belongs to the FPG family.</text>
</comment>